<organism>
    <name type="scientific">Mycobacterium tuberculosis (strain ATCC 25618 / H37Rv)</name>
    <dbReference type="NCBI Taxonomy" id="83332"/>
    <lineage>
        <taxon>Bacteria</taxon>
        <taxon>Bacillati</taxon>
        <taxon>Actinomycetota</taxon>
        <taxon>Actinomycetes</taxon>
        <taxon>Mycobacteriales</taxon>
        <taxon>Mycobacteriaceae</taxon>
        <taxon>Mycobacterium</taxon>
        <taxon>Mycobacterium tuberculosis complex</taxon>
    </lineage>
</organism>
<comment type="function">
    <text evidence="1">Part of the ABC transporter complex ModABC involved in molybdenum import. Responsible for energy coupling to the transport system.</text>
</comment>
<comment type="catalytic activity">
    <reaction evidence="1">
        <text>molybdate(out) + ATP + H2O = molybdate(in) + ADP + phosphate + H(+)</text>
        <dbReference type="Rhea" id="RHEA:22020"/>
        <dbReference type="ChEBI" id="CHEBI:15377"/>
        <dbReference type="ChEBI" id="CHEBI:15378"/>
        <dbReference type="ChEBI" id="CHEBI:30616"/>
        <dbReference type="ChEBI" id="CHEBI:36264"/>
        <dbReference type="ChEBI" id="CHEBI:43474"/>
        <dbReference type="ChEBI" id="CHEBI:456216"/>
        <dbReference type="EC" id="7.3.2.5"/>
    </reaction>
</comment>
<comment type="subunit">
    <text evidence="1">The complex is composed of two ATP-binding proteins (ModC), two transmembrane proteins (ModB) and a solute-binding protein (ModA).</text>
</comment>
<comment type="subcellular location">
    <subcellularLocation>
        <location evidence="1">Cell membrane</location>
        <topology evidence="1">Peripheral membrane protein</topology>
    </subcellularLocation>
</comment>
<comment type="similarity">
    <text evidence="1">Belongs to the ABC transporter superfamily. Molybdate importer (TC 3.A.1.8) family.</text>
</comment>
<evidence type="ECO:0000255" key="1">
    <source>
        <dbReference type="HAMAP-Rule" id="MF_01705"/>
    </source>
</evidence>
<evidence type="ECO:0000255" key="2">
    <source>
        <dbReference type="PROSITE-ProRule" id="PRU01213"/>
    </source>
</evidence>
<evidence type="ECO:0000305" key="3"/>
<reference key="1">
    <citation type="submission" date="1996-07" db="EMBL/GenBank/DDBJ databases">
        <authorList>
            <person name="Laqueyrerie A."/>
        </authorList>
    </citation>
    <scope>NUCLEOTIDE SEQUENCE [GENOMIC DNA]</scope>
    <source>
        <strain>ATCC 25618 / H37Rv</strain>
    </source>
</reference>
<reference key="2">
    <citation type="journal article" date="1998" name="Nature">
        <title>Deciphering the biology of Mycobacterium tuberculosis from the complete genome sequence.</title>
        <authorList>
            <person name="Cole S.T."/>
            <person name="Brosch R."/>
            <person name="Parkhill J."/>
            <person name="Garnier T."/>
            <person name="Churcher C.M."/>
            <person name="Harris D.E."/>
            <person name="Gordon S.V."/>
            <person name="Eiglmeier K."/>
            <person name="Gas S."/>
            <person name="Barry C.E. III"/>
            <person name="Tekaia F."/>
            <person name="Badcock K."/>
            <person name="Basham D."/>
            <person name="Brown D."/>
            <person name="Chillingworth T."/>
            <person name="Connor R."/>
            <person name="Davies R.M."/>
            <person name="Devlin K."/>
            <person name="Feltwell T."/>
            <person name="Gentles S."/>
            <person name="Hamlin N."/>
            <person name="Holroyd S."/>
            <person name="Hornsby T."/>
            <person name="Jagels K."/>
            <person name="Krogh A."/>
            <person name="McLean J."/>
            <person name="Moule S."/>
            <person name="Murphy L.D."/>
            <person name="Oliver S."/>
            <person name="Osborne J."/>
            <person name="Quail M.A."/>
            <person name="Rajandream M.A."/>
            <person name="Rogers J."/>
            <person name="Rutter S."/>
            <person name="Seeger K."/>
            <person name="Skelton S."/>
            <person name="Squares S."/>
            <person name="Squares R."/>
            <person name="Sulston J.E."/>
            <person name="Taylor K."/>
            <person name="Whitehead S."/>
            <person name="Barrell B.G."/>
        </authorList>
    </citation>
    <scope>NUCLEOTIDE SEQUENCE [LARGE SCALE GENOMIC DNA]</scope>
    <source>
        <strain>ATCC 25618 / H37Rv</strain>
    </source>
</reference>
<reference key="3">
    <citation type="journal article" date="2011" name="Mol. Cell. Proteomics">
        <title>Proteogenomic analysis of Mycobacterium tuberculosis by high resolution mass spectrometry.</title>
        <authorList>
            <person name="Kelkar D.S."/>
            <person name="Kumar D."/>
            <person name="Kumar P."/>
            <person name="Balakrishnan L."/>
            <person name="Muthusamy B."/>
            <person name="Yadav A.K."/>
            <person name="Shrivastava P."/>
            <person name="Marimuthu A."/>
            <person name="Anand S."/>
            <person name="Sundaram H."/>
            <person name="Kingsbury R."/>
            <person name="Harsha H.C."/>
            <person name="Nair B."/>
            <person name="Prasad T.S."/>
            <person name="Chauhan D.S."/>
            <person name="Katoch K."/>
            <person name="Katoch V.M."/>
            <person name="Kumar P."/>
            <person name="Chaerkady R."/>
            <person name="Ramachandran S."/>
            <person name="Dash D."/>
            <person name="Pandey A."/>
        </authorList>
    </citation>
    <scope>IDENTIFICATION BY MASS SPECTROMETRY [LARGE SCALE ANALYSIS]</scope>
    <source>
        <strain>ATCC 25618 / H37Rv</strain>
    </source>
</reference>
<gene>
    <name evidence="1" type="primary">modC</name>
    <name type="ordered locus">Rv1859</name>
    <name type="ORF">MTCY359.14</name>
</gene>
<proteinExistence type="evidence at protein level"/>
<sequence>MSKLQLRAVVADRRLDVEFSVSAGEVLAVLGPNGAGKSTALHVIAGLLRPDAGLVRLGDRVLTDTEAGVNVATHDRRVGLLLQDPLLFPHLSVAKNVAFGPQCRRGMFGSGRARTRASALRWLREVNAEQFADRKPRQLSGGQAQRVAIARALAAEPDVLLLDEPLTGLDVAAAAGIRSVLRSVVARSGCAVVLTTHDLLDVFTLADRVLVLESGTIAEIGPVADVLTAPRSRFGARIAGVNLVNGTIGPDGSLRTQSGAHWYGTPVQDLPTGHEAIAVFPPTAVAVYPEPPHGSPRNIVGLTVAEVDTRGPTVLVRGHDQPGGAPGLAACITVDAATELRVAPGSRVWFSVKAQEVALHPAPHQHASS</sequence>
<keyword id="KW-0067">ATP-binding</keyword>
<keyword id="KW-1003">Cell membrane</keyword>
<keyword id="KW-0472">Membrane</keyword>
<keyword id="KW-0500">Molybdenum</keyword>
<keyword id="KW-0547">Nucleotide-binding</keyword>
<keyword id="KW-1185">Reference proteome</keyword>
<keyword id="KW-1278">Translocase</keyword>
<keyword id="KW-0813">Transport</keyword>
<feature type="chain" id="PRO_0000092565" description="Molybdenum import ATP-binding protein ModC">
    <location>
        <begin position="1"/>
        <end position="369"/>
    </location>
</feature>
<feature type="domain" description="ABC transporter" evidence="1">
    <location>
        <begin position="4"/>
        <end position="239"/>
    </location>
</feature>
<feature type="domain" description="Mop" evidence="2">
    <location>
        <begin position="293"/>
        <end position="361"/>
    </location>
</feature>
<feature type="binding site" evidence="1">
    <location>
        <begin position="31"/>
        <end position="38"/>
    </location>
    <ligand>
        <name>ATP</name>
        <dbReference type="ChEBI" id="CHEBI:30616"/>
    </ligand>
</feature>
<feature type="sequence conflict" description="In Ref. 1; CAA67644." evidence="3" ref="1">
    <original>DAGLVRLGDRVLTDTEAGVNVATHDRRVGLLLQDPLLFPHLSVAKNVAFGPQCRRGMFGSG</original>
    <variation>RRGLGTFGGPGVDRHRGRGECGDPRPSSRAAVARPVVVSTPERGQKRGLRTTMPSRDVWVRA</variation>
    <location>
        <begin position="51"/>
        <end position="111"/>
    </location>
</feature>
<dbReference type="EC" id="7.3.2.5" evidence="1"/>
<dbReference type="EMBL" id="X99258">
    <property type="protein sequence ID" value="CAA67644.1"/>
    <property type="molecule type" value="Genomic_DNA"/>
</dbReference>
<dbReference type="EMBL" id="AL123456">
    <property type="protein sequence ID" value="CCP44625.1"/>
    <property type="molecule type" value="Genomic_DNA"/>
</dbReference>
<dbReference type="PIR" id="C70666">
    <property type="entry name" value="C70666"/>
</dbReference>
<dbReference type="RefSeq" id="NP_216375.1">
    <property type="nucleotide sequence ID" value="NC_000962.3"/>
</dbReference>
<dbReference type="RefSeq" id="WP_003899051.1">
    <property type="nucleotide sequence ID" value="NZ_NVQJ01000013.1"/>
</dbReference>
<dbReference type="SMR" id="P9WQL3"/>
<dbReference type="FunCoup" id="P9WQL3">
    <property type="interactions" value="102"/>
</dbReference>
<dbReference type="STRING" id="83332.Rv1859"/>
<dbReference type="TCDB" id="3.A.1.8.5">
    <property type="family name" value="the atp-binding cassette (abc) superfamily"/>
</dbReference>
<dbReference type="PaxDb" id="83332-Rv1859"/>
<dbReference type="DNASU" id="885731"/>
<dbReference type="GeneID" id="885731"/>
<dbReference type="KEGG" id="mtu:Rv1859"/>
<dbReference type="KEGG" id="mtv:RVBD_1859"/>
<dbReference type="TubercuList" id="Rv1859"/>
<dbReference type="eggNOG" id="COG1118">
    <property type="taxonomic scope" value="Bacteria"/>
</dbReference>
<dbReference type="InParanoid" id="P9WQL3"/>
<dbReference type="OrthoDB" id="9112331at2"/>
<dbReference type="PhylomeDB" id="P9WQL3"/>
<dbReference type="Proteomes" id="UP000001584">
    <property type="component" value="Chromosome"/>
</dbReference>
<dbReference type="GO" id="GO:0005886">
    <property type="term" value="C:plasma membrane"/>
    <property type="evidence" value="ECO:0000318"/>
    <property type="project" value="GO_Central"/>
</dbReference>
<dbReference type="GO" id="GO:0015412">
    <property type="term" value="F:ABC-type molybdate transporter activity"/>
    <property type="evidence" value="ECO:0007669"/>
    <property type="project" value="UniProtKB-EC"/>
</dbReference>
<dbReference type="GO" id="GO:0005524">
    <property type="term" value="F:ATP binding"/>
    <property type="evidence" value="ECO:0007669"/>
    <property type="project" value="UniProtKB-KW"/>
</dbReference>
<dbReference type="GO" id="GO:0016887">
    <property type="term" value="F:ATP hydrolysis activity"/>
    <property type="evidence" value="ECO:0007669"/>
    <property type="project" value="InterPro"/>
</dbReference>
<dbReference type="GO" id="GO:0022857">
    <property type="term" value="F:transmembrane transporter activity"/>
    <property type="evidence" value="ECO:0000318"/>
    <property type="project" value="GO_Central"/>
</dbReference>
<dbReference type="GO" id="GO:0055085">
    <property type="term" value="P:transmembrane transport"/>
    <property type="evidence" value="ECO:0000318"/>
    <property type="project" value="GO_Central"/>
</dbReference>
<dbReference type="FunFam" id="3.40.50.300:FF:002924">
    <property type="entry name" value="ABC transporter ATP-binding protein"/>
    <property type="match status" value="1"/>
</dbReference>
<dbReference type="Gene3D" id="2.40.50.100">
    <property type="match status" value="1"/>
</dbReference>
<dbReference type="Gene3D" id="3.40.50.300">
    <property type="entry name" value="P-loop containing nucleotide triphosphate hydrolases"/>
    <property type="match status" value="1"/>
</dbReference>
<dbReference type="InterPro" id="IPR003593">
    <property type="entry name" value="AAA+_ATPase"/>
</dbReference>
<dbReference type="InterPro" id="IPR003439">
    <property type="entry name" value="ABC_transporter-like_ATP-bd"/>
</dbReference>
<dbReference type="InterPro" id="IPR017871">
    <property type="entry name" value="ABC_transporter-like_CS"/>
</dbReference>
<dbReference type="InterPro" id="IPR008995">
    <property type="entry name" value="Mo/tungstate-bd_C_term_dom"/>
</dbReference>
<dbReference type="InterPro" id="IPR050334">
    <property type="entry name" value="Molybdenum_import_ModC"/>
</dbReference>
<dbReference type="InterPro" id="IPR004606">
    <property type="entry name" value="Mop_domain"/>
</dbReference>
<dbReference type="InterPro" id="IPR027417">
    <property type="entry name" value="P-loop_NTPase"/>
</dbReference>
<dbReference type="InterPro" id="IPR005116">
    <property type="entry name" value="Transp-assoc_OB_typ1"/>
</dbReference>
<dbReference type="PANTHER" id="PTHR43514">
    <property type="entry name" value="ABC TRANSPORTER I FAMILY MEMBER 10"/>
    <property type="match status" value="1"/>
</dbReference>
<dbReference type="PANTHER" id="PTHR43514:SF4">
    <property type="entry name" value="ABC TRANSPORTER I FAMILY MEMBER 10"/>
    <property type="match status" value="1"/>
</dbReference>
<dbReference type="Pfam" id="PF00005">
    <property type="entry name" value="ABC_tran"/>
    <property type="match status" value="1"/>
</dbReference>
<dbReference type="Pfam" id="PF03459">
    <property type="entry name" value="TOBE"/>
    <property type="match status" value="1"/>
</dbReference>
<dbReference type="SMART" id="SM00382">
    <property type="entry name" value="AAA"/>
    <property type="match status" value="1"/>
</dbReference>
<dbReference type="SUPFAM" id="SSF50331">
    <property type="entry name" value="MOP-like"/>
    <property type="match status" value="1"/>
</dbReference>
<dbReference type="SUPFAM" id="SSF52540">
    <property type="entry name" value="P-loop containing nucleoside triphosphate hydrolases"/>
    <property type="match status" value="1"/>
</dbReference>
<dbReference type="PROSITE" id="PS00211">
    <property type="entry name" value="ABC_TRANSPORTER_1"/>
    <property type="match status" value="1"/>
</dbReference>
<dbReference type="PROSITE" id="PS50893">
    <property type="entry name" value="ABC_TRANSPORTER_2"/>
    <property type="match status" value="1"/>
</dbReference>
<dbReference type="PROSITE" id="PS51241">
    <property type="entry name" value="MODC"/>
    <property type="match status" value="1"/>
</dbReference>
<dbReference type="PROSITE" id="PS51866">
    <property type="entry name" value="MOP"/>
    <property type="match status" value="1"/>
</dbReference>
<accession>P9WQL3</accession>
<accession>L0TAL9</accession>
<accession>O05126</accession>
<accession>P95155</accession>
<name>MODC_MYCTU</name>
<protein>
    <recommendedName>
        <fullName evidence="1">Molybdenum import ATP-binding protein ModC</fullName>
        <ecNumber evidence="1">7.3.2.5</ecNumber>
    </recommendedName>
</protein>